<gene>
    <name evidence="1" type="primary">selU</name>
    <name type="ordered locus">EcHS_A0577</name>
</gene>
<reference key="1">
    <citation type="journal article" date="2008" name="J. Bacteriol.">
        <title>The pangenome structure of Escherichia coli: comparative genomic analysis of E. coli commensal and pathogenic isolates.</title>
        <authorList>
            <person name="Rasko D.A."/>
            <person name="Rosovitz M.J."/>
            <person name="Myers G.S.A."/>
            <person name="Mongodin E.F."/>
            <person name="Fricke W.F."/>
            <person name="Gajer P."/>
            <person name="Crabtree J."/>
            <person name="Sebaihia M."/>
            <person name="Thomson N.R."/>
            <person name="Chaudhuri R."/>
            <person name="Henderson I.R."/>
            <person name="Sperandio V."/>
            <person name="Ravel J."/>
        </authorList>
    </citation>
    <scope>NUCLEOTIDE SEQUENCE [LARGE SCALE GENOMIC DNA]</scope>
    <source>
        <strain>HS</strain>
    </source>
</reference>
<accession>A7ZXF7</accession>
<protein>
    <recommendedName>
        <fullName evidence="1">tRNA 2-selenouridine synthase</fullName>
        <ecNumber evidence="1">2.9.1.3</ecNumber>
    </recommendedName>
</protein>
<evidence type="ECO:0000255" key="1">
    <source>
        <dbReference type="HAMAP-Rule" id="MF_01622"/>
    </source>
</evidence>
<proteinExistence type="inferred from homology"/>
<organism>
    <name type="scientific">Escherichia coli O9:H4 (strain HS)</name>
    <dbReference type="NCBI Taxonomy" id="331112"/>
    <lineage>
        <taxon>Bacteria</taxon>
        <taxon>Pseudomonadati</taxon>
        <taxon>Pseudomonadota</taxon>
        <taxon>Gammaproteobacteria</taxon>
        <taxon>Enterobacterales</taxon>
        <taxon>Enterobacteriaceae</taxon>
        <taxon>Escherichia</taxon>
    </lineage>
</organism>
<sequence>MQERHTEQDYRALLIADTPIIDVRAPIEFEQGAMPAAINLPLMNNDERAAVGTCYKQQGSDAALALGHKLVAGEIRQQRMDAWRAACLQNPQGILCCARGGQRSHIVQSWLHAAGIDYPLVEGGYKALRQTAIQATIELAQKPIVLIGGCTGSGKTLLVQQQPNGVDLEGLARHRGSAFGRTLQPQLSQASFENLLAAEMLKTDARQNLRLWVLEDESRMIGSNHLPECLRERMTQAAIAVVEDPFEIRLERLNEEYFLRMHHDFTHAYGDEQGWQEYCEYLHHGLSAIKRRLGLQRYNELAAQLDTALTTQLTTGSTDGHLAWLVPLLKEYYDPMYRYQLEKKAEKVVFRGEWAEVAEWVKAQ</sequence>
<feature type="chain" id="PRO_1000069588" description="tRNA 2-selenouridine synthase">
    <location>
        <begin position="1"/>
        <end position="364"/>
    </location>
</feature>
<feature type="domain" description="Rhodanese" evidence="1">
    <location>
        <begin position="14"/>
        <end position="137"/>
    </location>
</feature>
<feature type="active site" description="S-selanylcysteine intermediate" evidence="1">
    <location>
        <position position="97"/>
    </location>
</feature>
<comment type="function">
    <text evidence="1">Involved in the post-transcriptional modification of the uridine at the wobble position (U34) of tRNA(Lys), tRNA(Glu) and tRNA(Gln). Catalyzes the conversion of 2-thiouridine (S2U-RNA) to 2-selenouridine (Se2U-RNA). Acts in a two-step process involving geranylation of 2-thiouridine (S2U) to S-geranyl-2-thiouridine (geS2U) and subsequent selenation of the latter derivative to 2-selenouridine (Se2U) in the tRNA chain.</text>
</comment>
<comment type="catalytic activity">
    <reaction evidence="1">
        <text>5-methylaminomethyl-2-thiouridine(34) in tRNA + selenophosphate + (2E)-geranyl diphosphate + H2O + H(+) = 5-methylaminomethyl-2-selenouridine(34) in tRNA + (2E)-thiogeraniol + phosphate + diphosphate</text>
        <dbReference type="Rhea" id="RHEA:42716"/>
        <dbReference type="Rhea" id="RHEA-COMP:10195"/>
        <dbReference type="Rhea" id="RHEA-COMP:10196"/>
        <dbReference type="ChEBI" id="CHEBI:15377"/>
        <dbReference type="ChEBI" id="CHEBI:15378"/>
        <dbReference type="ChEBI" id="CHEBI:16144"/>
        <dbReference type="ChEBI" id="CHEBI:33019"/>
        <dbReference type="ChEBI" id="CHEBI:43474"/>
        <dbReference type="ChEBI" id="CHEBI:58057"/>
        <dbReference type="ChEBI" id="CHEBI:74455"/>
        <dbReference type="ChEBI" id="CHEBI:82743"/>
        <dbReference type="ChEBI" id="CHEBI:143703"/>
        <dbReference type="EC" id="2.9.1.3"/>
    </reaction>
    <physiologicalReaction direction="left-to-right" evidence="1">
        <dbReference type="Rhea" id="RHEA:42717"/>
    </physiologicalReaction>
</comment>
<comment type="catalytic activity">
    <reaction evidence="1">
        <text>5-methylaminomethyl-2-thiouridine(34) in tRNA + (2E)-geranyl diphosphate = 5-methylaminomethyl-S-(2E)-geranyl-thiouridine(34) in tRNA + diphosphate</text>
        <dbReference type="Rhea" id="RHEA:14085"/>
        <dbReference type="Rhea" id="RHEA-COMP:10195"/>
        <dbReference type="Rhea" id="RHEA-COMP:14654"/>
        <dbReference type="ChEBI" id="CHEBI:33019"/>
        <dbReference type="ChEBI" id="CHEBI:58057"/>
        <dbReference type="ChEBI" id="CHEBI:74455"/>
        <dbReference type="ChEBI" id="CHEBI:140632"/>
    </reaction>
    <physiologicalReaction direction="left-to-right" evidence="1">
        <dbReference type="Rhea" id="RHEA:14086"/>
    </physiologicalReaction>
</comment>
<comment type="catalytic activity">
    <reaction evidence="1">
        <text>5-methylaminomethyl-S-(2E)-geranyl-thiouridine(34) in tRNA + selenophosphate + H(+) = 5-methylaminomethyl-2-(Se-phospho)selenouridine(34) in tRNA + (2E)-thiogeraniol</text>
        <dbReference type="Rhea" id="RHEA:60172"/>
        <dbReference type="Rhea" id="RHEA-COMP:14654"/>
        <dbReference type="Rhea" id="RHEA-COMP:15523"/>
        <dbReference type="ChEBI" id="CHEBI:15378"/>
        <dbReference type="ChEBI" id="CHEBI:16144"/>
        <dbReference type="ChEBI" id="CHEBI:140632"/>
        <dbReference type="ChEBI" id="CHEBI:143702"/>
        <dbReference type="ChEBI" id="CHEBI:143703"/>
    </reaction>
    <physiologicalReaction direction="left-to-right" evidence="1">
        <dbReference type="Rhea" id="RHEA:60173"/>
    </physiologicalReaction>
</comment>
<comment type="catalytic activity">
    <reaction evidence="1">
        <text>5-methylaminomethyl-2-(Se-phospho)selenouridine(34) in tRNA + H2O = 5-methylaminomethyl-2-selenouridine(34) in tRNA + phosphate</text>
        <dbReference type="Rhea" id="RHEA:60176"/>
        <dbReference type="Rhea" id="RHEA-COMP:10196"/>
        <dbReference type="Rhea" id="RHEA-COMP:15523"/>
        <dbReference type="ChEBI" id="CHEBI:15377"/>
        <dbReference type="ChEBI" id="CHEBI:43474"/>
        <dbReference type="ChEBI" id="CHEBI:82743"/>
        <dbReference type="ChEBI" id="CHEBI:143702"/>
    </reaction>
    <physiologicalReaction direction="left-to-right" evidence="1">
        <dbReference type="Rhea" id="RHEA:60177"/>
    </physiologicalReaction>
</comment>
<comment type="subunit">
    <text evidence="1">Monomer.</text>
</comment>
<comment type="similarity">
    <text evidence="1">Belongs to the SelU family.</text>
</comment>
<keyword id="KW-0711">Selenium</keyword>
<keyword id="KW-0808">Transferase</keyword>
<name>SELU_ECOHS</name>
<dbReference type="EC" id="2.9.1.3" evidence="1"/>
<dbReference type="EMBL" id="CP000802">
    <property type="protein sequence ID" value="ABV04961.1"/>
    <property type="molecule type" value="Genomic_DNA"/>
</dbReference>
<dbReference type="SMR" id="A7ZXF7"/>
<dbReference type="KEGG" id="ecx:EcHS_A0577"/>
<dbReference type="HOGENOM" id="CLU_043456_1_0_6"/>
<dbReference type="GO" id="GO:0016765">
    <property type="term" value="F:transferase activity, transferring alkyl or aryl (other than methyl) groups"/>
    <property type="evidence" value="ECO:0007669"/>
    <property type="project" value="UniProtKB-UniRule"/>
</dbReference>
<dbReference type="GO" id="GO:0043828">
    <property type="term" value="F:tRNA 2-selenouridine synthase activity"/>
    <property type="evidence" value="ECO:0007669"/>
    <property type="project" value="UniProtKB-EC"/>
</dbReference>
<dbReference type="GO" id="GO:0002098">
    <property type="term" value="P:tRNA wobble uridine modification"/>
    <property type="evidence" value="ECO:0007669"/>
    <property type="project" value="UniProtKB-UniRule"/>
</dbReference>
<dbReference type="CDD" id="cd01520">
    <property type="entry name" value="RHOD_YbbB"/>
    <property type="match status" value="1"/>
</dbReference>
<dbReference type="FunFam" id="3.40.250.10:FF:000009">
    <property type="entry name" value="tRNA 2-selenouridine/geranyl-2-thiouridine synthase"/>
    <property type="match status" value="1"/>
</dbReference>
<dbReference type="Gene3D" id="3.40.250.10">
    <property type="entry name" value="Rhodanese-like domain"/>
    <property type="match status" value="1"/>
</dbReference>
<dbReference type="HAMAP" id="MF_01622">
    <property type="entry name" value="tRNA_sel_U_synth"/>
    <property type="match status" value="1"/>
</dbReference>
<dbReference type="InterPro" id="IPR001763">
    <property type="entry name" value="Rhodanese-like_dom"/>
</dbReference>
<dbReference type="InterPro" id="IPR036873">
    <property type="entry name" value="Rhodanese-like_dom_sf"/>
</dbReference>
<dbReference type="InterPro" id="IPR017582">
    <property type="entry name" value="SelU"/>
</dbReference>
<dbReference type="NCBIfam" id="NF008749">
    <property type="entry name" value="PRK11784.1-1"/>
    <property type="match status" value="1"/>
</dbReference>
<dbReference type="NCBIfam" id="NF008751">
    <property type="entry name" value="PRK11784.1-3"/>
    <property type="match status" value="1"/>
</dbReference>
<dbReference type="NCBIfam" id="TIGR03167">
    <property type="entry name" value="tRNA_sel_U_synt"/>
    <property type="match status" value="1"/>
</dbReference>
<dbReference type="PANTHER" id="PTHR30401">
    <property type="entry name" value="TRNA 2-SELENOURIDINE SYNTHASE"/>
    <property type="match status" value="1"/>
</dbReference>
<dbReference type="PANTHER" id="PTHR30401:SF0">
    <property type="entry name" value="TRNA 2-SELENOURIDINE SYNTHASE"/>
    <property type="match status" value="1"/>
</dbReference>
<dbReference type="Pfam" id="PF00581">
    <property type="entry name" value="Rhodanese"/>
    <property type="match status" value="1"/>
</dbReference>
<dbReference type="SMART" id="SM00450">
    <property type="entry name" value="RHOD"/>
    <property type="match status" value="1"/>
</dbReference>
<dbReference type="SUPFAM" id="SSF52821">
    <property type="entry name" value="Rhodanese/Cell cycle control phosphatase"/>
    <property type="match status" value="1"/>
</dbReference>
<dbReference type="PROSITE" id="PS50206">
    <property type="entry name" value="RHODANESE_3"/>
    <property type="match status" value="1"/>
</dbReference>